<protein>
    <recommendedName>
        <fullName evidence="1">Protein nucleotidyltransferase YdiU</fullName>
        <ecNumber evidence="1">2.7.7.-</ecNumber>
    </recommendedName>
    <alternativeName>
        <fullName evidence="1">Protein adenylyltransferase YdiU</fullName>
        <ecNumber evidence="1">2.7.7.108</ecNumber>
    </alternativeName>
    <alternativeName>
        <fullName evidence="1">Protein uridylyltransferase YdiU</fullName>
        <ecNumber evidence="1">2.7.7.-</ecNumber>
    </alternativeName>
</protein>
<evidence type="ECO:0000255" key="1">
    <source>
        <dbReference type="HAMAP-Rule" id="MF_00692"/>
    </source>
</evidence>
<accession>Q60B95</accession>
<comment type="function">
    <text evidence="1">Nucleotidyltransferase involved in the post-translational modification of proteins. It can catalyze the addition of adenosine monophosphate (AMP) or uridine monophosphate (UMP) to a protein, resulting in modifications known as AMPylation and UMPylation.</text>
</comment>
<comment type="catalytic activity">
    <reaction evidence="1">
        <text>L-seryl-[protein] + ATP = 3-O-(5'-adenylyl)-L-seryl-[protein] + diphosphate</text>
        <dbReference type="Rhea" id="RHEA:58120"/>
        <dbReference type="Rhea" id="RHEA-COMP:9863"/>
        <dbReference type="Rhea" id="RHEA-COMP:15073"/>
        <dbReference type="ChEBI" id="CHEBI:29999"/>
        <dbReference type="ChEBI" id="CHEBI:30616"/>
        <dbReference type="ChEBI" id="CHEBI:33019"/>
        <dbReference type="ChEBI" id="CHEBI:142516"/>
        <dbReference type="EC" id="2.7.7.108"/>
    </reaction>
</comment>
<comment type="catalytic activity">
    <reaction evidence="1">
        <text>L-threonyl-[protein] + ATP = 3-O-(5'-adenylyl)-L-threonyl-[protein] + diphosphate</text>
        <dbReference type="Rhea" id="RHEA:54292"/>
        <dbReference type="Rhea" id="RHEA-COMP:11060"/>
        <dbReference type="Rhea" id="RHEA-COMP:13847"/>
        <dbReference type="ChEBI" id="CHEBI:30013"/>
        <dbReference type="ChEBI" id="CHEBI:30616"/>
        <dbReference type="ChEBI" id="CHEBI:33019"/>
        <dbReference type="ChEBI" id="CHEBI:138113"/>
        <dbReference type="EC" id="2.7.7.108"/>
    </reaction>
</comment>
<comment type="catalytic activity">
    <reaction evidence="1">
        <text>L-tyrosyl-[protein] + ATP = O-(5'-adenylyl)-L-tyrosyl-[protein] + diphosphate</text>
        <dbReference type="Rhea" id="RHEA:54288"/>
        <dbReference type="Rhea" id="RHEA-COMP:10136"/>
        <dbReference type="Rhea" id="RHEA-COMP:13846"/>
        <dbReference type="ChEBI" id="CHEBI:30616"/>
        <dbReference type="ChEBI" id="CHEBI:33019"/>
        <dbReference type="ChEBI" id="CHEBI:46858"/>
        <dbReference type="ChEBI" id="CHEBI:83624"/>
        <dbReference type="EC" id="2.7.7.108"/>
    </reaction>
</comment>
<comment type="catalytic activity">
    <reaction evidence="1">
        <text>L-histidyl-[protein] + UTP = N(tele)-(5'-uridylyl)-L-histidyl-[protein] + diphosphate</text>
        <dbReference type="Rhea" id="RHEA:83891"/>
        <dbReference type="Rhea" id="RHEA-COMP:9745"/>
        <dbReference type="Rhea" id="RHEA-COMP:20239"/>
        <dbReference type="ChEBI" id="CHEBI:29979"/>
        <dbReference type="ChEBI" id="CHEBI:33019"/>
        <dbReference type="ChEBI" id="CHEBI:46398"/>
        <dbReference type="ChEBI" id="CHEBI:233474"/>
    </reaction>
</comment>
<comment type="catalytic activity">
    <reaction evidence="1">
        <text>L-seryl-[protein] + UTP = O-(5'-uridylyl)-L-seryl-[protein] + diphosphate</text>
        <dbReference type="Rhea" id="RHEA:64604"/>
        <dbReference type="Rhea" id="RHEA-COMP:9863"/>
        <dbReference type="Rhea" id="RHEA-COMP:16635"/>
        <dbReference type="ChEBI" id="CHEBI:29999"/>
        <dbReference type="ChEBI" id="CHEBI:33019"/>
        <dbReference type="ChEBI" id="CHEBI:46398"/>
        <dbReference type="ChEBI" id="CHEBI:156051"/>
    </reaction>
</comment>
<comment type="catalytic activity">
    <reaction evidence="1">
        <text>L-tyrosyl-[protein] + UTP = O-(5'-uridylyl)-L-tyrosyl-[protein] + diphosphate</text>
        <dbReference type="Rhea" id="RHEA:83887"/>
        <dbReference type="Rhea" id="RHEA-COMP:10136"/>
        <dbReference type="Rhea" id="RHEA-COMP:20238"/>
        <dbReference type="ChEBI" id="CHEBI:33019"/>
        <dbReference type="ChEBI" id="CHEBI:46398"/>
        <dbReference type="ChEBI" id="CHEBI:46858"/>
        <dbReference type="ChEBI" id="CHEBI:90602"/>
    </reaction>
</comment>
<comment type="cofactor">
    <cofactor evidence="1">
        <name>Mg(2+)</name>
        <dbReference type="ChEBI" id="CHEBI:18420"/>
    </cofactor>
    <cofactor evidence="1">
        <name>Mn(2+)</name>
        <dbReference type="ChEBI" id="CHEBI:29035"/>
    </cofactor>
</comment>
<comment type="similarity">
    <text evidence="1">Belongs to the SELO family.</text>
</comment>
<proteinExistence type="inferred from homology"/>
<organism>
    <name type="scientific">Methylococcus capsulatus (strain ATCC 33009 / NCIMB 11132 / Bath)</name>
    <dbReference type="NCBI Taxonomy" id="243233"/>
    <lineage>
        <taxon>Bacteria</taxon>
        <taxon>Pseudomonadati</taxon>
        <taxon>Pseudomonadota</taxon>
        <taxon>Gammaproteobacteria</taxon>
        <taxon>Methylococcales</taxon>
        <taxon>Methylococcaceae</taxon>
        <taxon>Methylococcus</taxon>
    </lineage>
</organism>
<reference key="1">
    <citation type="journal article" date="2004" name="PLoS Biol.">
        <title>Genomic insights into methanotrophy: the complete genome sequence of Methylococcus capsulatus (Bath).</title>
        <authorList>
            <person name="Ward N.L."/>
            <person name="Larsen O."/>
            <person name="Sakwa J."/>
            <person name="Bruseth L."/>
            <person name="Khouri H.M."/>
            <person name="Durkin A.S."/>
            <person name="Dimitrov G."/>
            <person name="Jiang L."/>
            <person name="Scanlan D."/>
            <person name="Kang K.H."/>
            <person name="Lewis M.R."/>
            <person name="Nelson K.E."/>
            <person name="Methe B.A."/>
            <person name="Wu M."/>
            <person name="Heidelberg J.F."/>
            <person name="Paulsen I.T."/>
            <person name="Fouts D.E."/>
            <person name="Ravel J."/>
            <person name="Tettelin H."/>
            <person name="Ren Q."/>
            <person name="Read T.D."/>
            <person name="DeBoy R.T."/>
            <person name="Seshadri R."/>
            <person name="Salzberg S.L."/>
            <person name="Jensen H.B."/>
            <person name="Birkeland N.K."/>
            <person name="Nelson W.C."/>
            <person name="Dodson R.J."/>
            <person name="Grindhaug S.H."/>
            <person name="Holt I.E."/>
            <person name="Eidhammer I."/>
            <person name="Jonasen I."/>
            <person name="Vanaken S."/>
            <person name="Utterback T.R."/>
            <person name="Feldblyum T.V."/>
            <person name="Fraser C.M."/>
            <person name="Lillehaug J.R."/>
            <person name="Eisen J.A."/>
        </authorList>
    </citation>
    <scope>NUCLEOTIDE SEQUENCE [LARGE SCALE GENOMIC DNA]</scope>
    <source>
        <strain>ATCC 33009 / NCIMB 11132 / Bath</strain>
    </source>
</reference>
<dbReference type="EC" id="2.7.7.-" evidence="1"/>
<dbReference type="EC" id="2.7.7.108" evidence="1"/>
<dbReference type="EMBL" id="AE017282">
    <property type="protein sequence ID" value="AAU93221.1"/>
    <property type="molecule type" value="Genomic_DNA"/>
</dbReference>
<dbReference type="SMR" id="Q60B95"/>
<dbReference type="STRING" id="243233.MCA0585"/>
<dbReference type="KEGG" id="mca:MCA0585"/>
<dbReference type="eggNOG" id="COG0397">
    <property type="taxonomic scope" value="Bacteria"/>
</dbReference>
<dbReference type="HOGENOM" id="CLU_010245_4_0_6"/>
<dbReference type="Proteomes" id="UP000006821">
    <property type="component" value="Chromosome"/>
</dbReference>
<dbReference type="GO" id="GO:0070733">
    <property type="term" value="F:AMPylase activity"/>
    <property type="evidence" value="ECO:0007669"/>
    <property type="project" value="RHEA"/>
</dbReference>
<dbReference type="GO" id="GO:0005524">
    <property type="term" value="F:ATP binding"/>
    <property type="evidence" value="ECO:0007669"/>
    <property type="project" value="UniProtKB-UniRule"/>
</dbReference>
<dbReference type="GO" id="GO:0000287">
    <property type="term" value="F:magnesium ion binding"/>
    <property type="evidence" value="ECO:0007669"/>
    <property type="project" value="UniProtKB-UniRule"/>
</dbReference>
<dbReference type="HAMAP" id="MF_00692">
    <property type="entry name" value="YdiU_SelO"/>
    <property type="match status" value="1"/>
</dbReference>
<dbReference type="InterPro" id="IPR003846">
    <property type="entry name" value="SelO"/>
</dbReference>
<dbReference type="NCBIfam" id="NF000658">
    <property type="entry name" value="PRK00029.1"/>
    <property type="match status" value="1"/>
</dbReference>
<dbReference type="PANTHER" id="PTHR32057">
    <property type="entry name" value="PROTEIN ADENYLYLTRANSFERASE SELO, MITOCHONDRIAL"/>
    <property type="match status" value="1"/>
</dbReference>
<dbReference type="PANTHER" id="PTHR32057:SF14">
    <property type="entry name" value="PROTEIN ADENYLYLTRANSFERASE SELO, MITOCHONDRIAL"/>
    <property type="match status" value="1"/>
</dbReference>
<dbReference type="Pfam" id="PF02696">
    <property type="entry name" value="SelO"/>
    <property type="match status" value="1"/>
</dbReference>
<sequence>MSTAMPGAFSPPRGLADLPLCPVYSRLGRPFHQPVAATSLPEPRMVHFNAALAGELGFGPEAGPQLLEILAGNRPWPGYASSASVYAGHQFGAWVPQLGDGRALLIAEVRTPARERVELQLKGAGPTPYSRGLDGRAVLRSSIREYLASEAMHALGVPTTRCLSLVASPQPVARETVESAAVVCRAAASFVRFGQFEYFAGRGQTEPMARLADHVIAEHFPHLQGHPERHAAWLGEVIERTARLIAQWQLLGFCHGVMNTDNFSVLGLTLDYGPFGFMDRFRWYHVCNHSDYEGRYAYRAQPEVGRWNCERLLQAVSPLLADAPGRAAEIGQDLLRRYASVYHRAVMRGWADKLGLREVRETDAGLIDEFLGLLQRGRGDFTRSFRLLGRIRTDSDAPARGVREAFADINAFDAWVADYRTRLRSEQNVDDEARAGRMNRVNPKYVLRNHLAQIAIDKAMLGDYSEVARLAELLRRPYDEQPDMEAYAAEPPDYMRNIEVSCSS</sequence>
<gene>
    <name evidence="1" type="primary">ydiU</name>
    <name evidence="1" type="synonym">selO</name>
    <name type="ordered locus">MCA0585</name>
</gene>
<feature type="chain" id="PRO_0000271832" description="Protein nucleotidyltransferase YdiU">
    <location>
        <begin position="1"/>
        <end position="504"/>
    </location>
</feature>
<feature type="active site" description="Proton acceptor" evidence="1">
    <location>
        <position position="261"/>
    </location>
</feature>
<feature type="binding site" evidence="1">
    <location>
        <position position="99"/>
    </location>
    <ligand>
        <name>ATP</name>
        <dbReference type="ChEBI" id="CHEBI:30616"/>
    </ligand>
</feature>
<feature type="binding site" evidence="1">
    <location>
        <position position="101"/>
    </location>
    <ligand>
        <name>ATP</name>
        <dbReference type="ChEBI" id="CHEBI:30616"/>
    </ligand>
</feature>
<feature type="binding site" evidence="1">
    <location>
        <position position="102"/>
    </location>
    <ligand>
        <name>ATP</name>
        <dbReference type="ChEBI" id="CHEBI:30616"/>
    </ligand>
</feature>
<feature type="binding site" evidence="1">
    <location>
        <position position="122"/>
    </location>
    <ligand>
        <name>ATP</name>
        <dbReference type="ChEBI" id="CHEBI:30616"/>
    </ligand>
</feature>
<feature type="binding site" evidence="1">
    <location>
        <position position="134"/>
    </location>
    <ligand>
        <name>ATP</name>
        <dbReference type="ChEBI" id="CHEBI:30616"/>
    </ligand>
</feature>
<feature type="binding site" evidence="1">
    <location>
        <position position="135"/>
    </location>
    <ligand>
        <name>ATP</name>
        <dbReference type="ChEBI" id="CHEBI:30616"/>
    </ligand>
</feature>
<feature type="binding site" evidence="1">
    <location>
        <position position="185"/>
    </location>
    <ligand>
        <name>ATP</name>
        <dbReference type="ChEBI" id="CHEBI:30616"/>
    </ligand>
</feature>
<feature type="binding site" evidence="1">
    <location>
        <position position="192"/>
    </location>
    <ligand>
        <name>ATP</name>
        <dbReference type="ChEBI" id="CHEBI:30616"/>
    </ligand>
</feature>
<feature type="binding site" evidence="1">
    <location>
        <position position="262"/>
    </location>
    <ligand>
        <name>Mg(2+)</name>
        <dbReference type="ChEBI" id="CHEBI:18420"/>
    </ligand>
</feature>
<feature type="binding site" evidence="1">
    <location>
        <position position="271"/>
    </location>
    <ligand>
        <name>ATP</name>
        <dbReference type="ChEBI" id="CHEBI:30616"/>
    </ligand>
</feature>
<feature type="binding site" evidence="1">
    <location>
        <position position="271"/>
    </location>
    <ligand>
        <name>Mg(2+)</name>
        <dbReference type="ChEBI" id="CHEBI:18420"/>
    </ligand>
</feature>
<keyword id="KW-0067">ATP-binding</keyword>
<keyword id="KW-0460">Magnesium</keyword>
<keyword id="KW-0464">Manganese</keyword>
<keyword id="KW-0479">Metal-binding</keyword>
<keyword id="KW-0547">Nucleotide-binding</keyword>
<keyword id="KW-0548">Nucleotidyltransferase</keyword>
<keyword id="KW-1185">Reference proteome</keyword>
<keyword id="KW-0808">Transferase</keyword>
<name>SELO_METCA</name>